<keyword id="KW-0028">Amino-acid biosynthesis</keyword>
<keyword id="KW-0100">Branched-chain amino acid biosynthesis</keyword>
<keyword id="KW-0432">Leucine biosynthesis</keyword>
<keyword id="KW-0456">Lyase</keyword>
<name>LEUD_ALIFM</name>
<organism>
    <name type="scientific">Aliivibrio fischeri (strain MJ11)</name>
    <name type="common">Vibrio fischeri</name>
    <dbReference type="NCBI Taxonomy" id="388396"/>
    <lineage>
        <taxon>Bacteria</taxon>
        <taxon>Pseudomonadati</taxon>
        <taxon>Pseudomonadota</taxon>
        <taxon>Gammaproteobacteria</taxon>
        <taxon>Vibrionales</taxon>
        <taxon>Vibrionaceae</taxon>
        <taxon>Aliivibrio</taxon>
    </lineage>
</organism>
<evidence type="ECO:0000255" key="1">
    <source>
        <dbReference type="HAMAP-Rule" id="MF_01031"/>
    </source>
</evidence>
<feature type="chain" id="PRO_1000135837" description="3-isopropylmalate dehydratase small subunit">
    <location>
        <begin position="1"/>
        <end position="200"/>
    </location>
</feature>
<accession>B5FGH1</accession>
<gene>
    <name evidence="1" type="primary">leuD</name>
    <name type="ordered locus">VFMJ11_0280</name>
</gene>
<protein>
    <recommendedName>
        <fullName evidence="1">3-isopropylmalate dehydratase small subunit</fullName>
        <ecNumber evidence="1">4.2.1.33</ecNumber>
    </recommendedName>
    <alternativeName>
        <fullName evidence="1">Alpha-IPM isomerase</fullName>
        <shortName evidence="1">IPMI</shortName>
    </alternativeName>
    <alternativeName>
        <fullName evidence="1">Isopropylmalate isomerase</fullName>
    </alternativeName>
</protein>
<sequence>MSGFKQHTGLVVPLDTANIDTDAIIPKQFLQKVNRIGFGKHLFHDWRFLDDAGEQPNPEFVMNAPRYQGATVLLARENFGCGSSREHAPWALADYGIQVMIAPSFADIFYGNSINNQMVPVRLTESEVDEIFQFVEANEGAEVTVDLEVMLVTANNKQYSFEIDEFRRHCLLNGLDNIGLTLQHADKISEYEAKIPSFLK</sequence>
<proteinExistence type="inferred from homology"/>
<dbReference type="EC" id="4.2.1.33" evidence="1"/>
<dbReference type="EMBL" id="CP001139">
    <property type="protein sequence ID" value="ACH64970.1"/>
    <property type="molecule type" value="Genomic_DNA"/>
</dbReference>
<dbReference type="RefSeq" id="WP_005417336.1">
    <property type="nucleotide sequence ID" value="NC_011184.1"/>
</dbReference>
<dbReference type="SMR" id="B5FGH1"/>
<dbReference type="KEGG" id="vfm:VFMJ11_0280"/>
<dbReference type="HOGENOM" id="CLU_081378_0_3_6"/>
<dbReference type="UniPathway" id="UPA00048">
    <property type="reaction ID" value="UER00071"/>
</dbReference>
<dbReference type="Proteomes" id="UP000001857">
    <property type="component" value="Chromosome I"/>
</dbReference>
<dbReference type="GO" id="GO:0009316">
    <property type="term" value="C:3-isopropylmalate dehydratase complex"/>
    <property type="evidence" value="ECO:0007669"/>
    <property type="project" value="InterPro"/>
</dbReference>
<dbReference type="GO" id="GO:0003861">
    <property type="term" value="F:3-isopropylmalate dehydratase activity"/>
    <property type="evidence" value="ECO:0007669"/>
    <property type="project" value="UniProtKB-UniRule"/>
</dbReference>
<dbReference type="GO" id="GO:0009098">
    <property type="term" value="P:L-leucine biosynthetic process"/>
    <property type="evidence" value="ECO:0007669"/>
    <property type="project" value="UniProtKB-UniRule"/>
</dbReference>
<dbReference type="CDD" id="cd01577">
    <property type="entry name" value="IPMI_Swivel"/>
    <property type="match status" value="1"/>
</dbReference>
<dbReference type="FunFam" id="3.20.19.10:FF:000003">
    <property type="entry name" value="3-isopropylmalate dehydratase small subunit"/>
    <property type="match status" value="1"/>
</dbReference>
<dbReference type="Gene3D" id="3.20.19.10">
    <property type="entry name" value="Aconitase, domain 4"/>
    <property type="match status" value="1"/>
</dbReference>
<dbReference type="HAMAP" id="MF_01031">
    <property type="entry name" value="LeuD_type1"/>
    <property type="match status" value="1"/>
</dbReference>
<dbReference type="InterPro" id="IPR004431">
    <property type="entry name" value="3-IsopropMal_deHydase_ssu"/>
</dbReference>
<dbReference type="InterPro" id="IPR015928">
    <property type="entry name" value="Aconitase/3IPM_dehydase_swvl"/>
</dbReference>
<dbReference type="InterPro" id="IPR000573">
    <property type="entry name" value="AconitaseA/IPMdHydase_ssu_swvl"/>
</dbReference>
<dbReference type="InterPro" id="IPR033940">
    <property type="entry name" value="IPMI_Swivel"/>
</dbReference>
<dbReference type="InterPro" id="IPR050075">
    <property type="entry name" value="LeuD"/>
</dbReference>
<dbReference type="NCBIfam" id="TIGR00171">
    <property type="entry name" value="leuD"/>
    <property type="match status" value="1"/>
</dbReference>
<dbReference type="NCBIfam" id="NF002458">
    <property type="entry name" value="PRK01641.1"/>
    <property type="match status" value="1"/>
</dbReference>
<dbReference type="PANTHER" id="PTHR43345:SF5">
    <property type="entry name" value="3-ISOPROPYLMALATE DEHYDRATASE SMALL SUBUNIT"/>
    <property type="match status" value="1"/>
</dbReference>
<dbReference type="PANTHER" id="PTHR43345">
    <property type="entry name" value="3-ISOPROPYLMALATE DEHYDRATASE SMALL SUBUNIT 2-RELATED-RELATED"/>
    <property type="match status" value="1"/>
</dbReference>
<dbReference type="Pfam" id="PF00694">
    <property type="entry name" value="Aconitase_C"/>
    <property type="match status" value="1"/>
</dbReference>
<dbReference type="SUPFAM" id="SSF52016">
    <property type="entry name" value="LeuD/IlvD-like"/>
    <property type="match status" value="1"/>
</dbReference>
<comment type="function">
    <text evidence="1">Catalyzes the isomerization between 2-isopropylmalate and 3-isopropylmalate, via the formation of 2-isopropylmaleate.</text>
</comment>
<comment type="catalytic activity">
    <reaction evidence="1">
        <text>(2R,3S)-3-isopropylmalate = (2S)-2-isopropylmalate</text>
        <dbReference type="Rhea" id="RHEA:32287"/>
        <dbReference type="ChEBI" id="CHEBI:1178"/>
        <dbReference type="ChEBI" id="CHEBI:35121"/>
        <dbReference type="EC" id="4.2.1.33"/>
    </reaction>
</comment>
<comment type="pathway">
    <text evidence="1">Amino-acid biosynthesis; L-leucine biosynthesis; L-leucine from 3-methyl-2-oxobutanoate: step 2/4.</text>
</comment>
<comment type="subunit">
    <text evidence="1">Heterodimer of LeuC and LeuD.</text>
</comment>
<comment type="similarity">
    <text evidence="1">Belongs to the LeuD family. LeuD type 1 subfamily.</text>
</comment>
<reference key="1">
    <citation type="submission" date="2008-08" db="EMBL/GenBank/DDBJ databases">
        <title>Complete sequence of Vibrio fischeri strain MJ11.</title>
        <authorList>
            <person name="Mandel M.J."/>
            <person name="Stabb E.V."/>
            <person name="Ruby E.G."/>
            <person name="Ferriera S."/>
            <person name="Johnson J."/>
            <person name="Kravitz S."/>
            <person name="Beeson K."/>
            <person name="Sutton G."/>
            <person name="Rogers Y.-H."/>
            <person name="Friedman R."/>
            <person name="Frazier M."/>
            <person name="Venter J.C."/>
        </authorList>
    </citation>
    <scope>NUCLEOTIDE SEQUENCE [LARGE SCALE GENOMIC DNA]</scope>
    <source>
        <strain>MJ11</strain>
    </source>
</reference>